<reference key="1">
    <citation type="journal article" date="2004" name="Environ. Microbiol.">
        <title>The genome of Desulfotalea psychrophila, a sulfate-reducing bacterium from permanently cold Arctic sediments.</title>
        <authorList>
            <person name="Rabus R."/>
            <person name="Ruepp A."/>
            <person name="Frickey T."/>
            <person name="Rattei T."/>
            <person name="Fartmann B."/>
            <person name="Stark M."/>
            <person name="Bauer M."/>
            <person name="Zibat A."/>
            <person name="Lombardot T."/>
            <person name="Becker I."/>
            <person name="Amann J."/>
            <person name="Gellner K."/>
            <person name="Teeling H."/>
            <person name="Leuschner W.D."/>
            <person name="Gloeckner F.-O."/>
            <person name="Lupas A.N."/>
            <person name="Amann R."/>
            <person name="Klenk H.-P."/>
        </authorList>
    </citation>
    <scope>NUCLEOTIDE SEQUENCE [LARGE SCALE GENOMIC DNA]</scope>
    <source>
        <strain>DSM 12343 / LSv54</strain>
    </source>
</reference>
<protein>
    <recommendedName>
        <fullName evidence="1">Small ribosomal subunit protein uS7</fullName>
    </recommendedName>
    <alternativeName>
        <fullName evidence="2">30S ribosomal protein S7</fullName>
    </alternativeName>
</protein>
<keyword id="KW-1185">Reference proteome</keyword>
<keyword id="KW-0687">Ribonucleoprotein</keyword>
<keyword id="KW-0689">Ribosomal protein</keyword>
<keyword id="KW-0694">RNA-binding</keyword>
<keyword id="KW-0699">rRNA-binding</keyword>
<keyword id="KW-0820">tRNA-binding</keyword>
<organism>
    <name type="scientific">Desulfotalea psychrophila (strain LSv54 / DSM 12343)</name>
    <dbReference type="NCBI Taxonomy" id="177439"/>
    <lineage>
        <taxon>Bacteria</taxon>
        <taxon>Pseudomonadati</taxon>
        <taxon>Thermodesulfobacteriota</taxon>
        <taxon>Desulfobulbia</taxon>
        <taxon>Desulfobulbales</taxon>
        <taxon>Desulfocapsaceae</taxon>
        <taxon>Desulfotalea</taxon>
    </lineage>
</organism>
<name>RS7_DESPS</name>
<proteinExistence type="inferred from homology"/>
<dbReference type="EMBL" id="CR522870">
    <property type="protein sequence ID" value="CAG35849.1"/>
    <property type="molecule type" value="Genomic_DNA"/>
</dbReference>
<dbReference type="RefSeq" id="WP_011188363.1">
    <property type="nucleotide sequence ID" value="NC_006138.1"/>
</dbReference>
<dbReference type="SMR" id="Q6AP75"/>
<dbReference type="STRING" id="177439.DP1120"/>
<dbReference type="KEGG" id="dps:DP1120"/>
<dbReference type="eggNOG" id="COG0049">
    <property type="taxonomic scope" value="Bacteria"/>
</dbReference>
<dbReference type="HOGENOM" id="CLU_072226_1_1_7"/>
<dbReference type="OrthoDB" id="9807653at2"/>
<dbReference type="Proteomes" id="UP000000602">
    <property type="component" value="Chromosome"/>
</dbReference>
<dbReference type="GO" id="GO:0015935">
    <property type="term" value="C:small ribosomal subunit"/>
    <property type="evidence" value="ECO:0007669"/>
    <property type="project" value="InterPro"/>
</dbReference>
<dbReference type="GO" id="GO:0019843">
    <property type="term" value="F:rRNA binding"/>
    <property type="evidence" value="ECO:0007669"/>
    <property type="project" value="UniProtKB-UniRule"/>
</dbReference>
<dbReference type="GO" id="GO:0003735">
    <property type="term" value="F:structural constituent of ribosome"/>
    <property type="evidence" value="ECO:0007669"/>
    <property type="project" value="InterPro"/>
</dbReference>
<dbReference type="GO" id="GO:0000049">
    <property type="term" value="F:tRNA binding"/>
    <property type="evidence" value="ECO:0007669"/>
    <property type="project" value="UniProtKB-UniRule"/>
</dbReference>
<dbReference type="GO" id="GO:0006412">
    <property type="term" value="P:translation"/>
    <property type="evidence" value="ECO:0007669"/>
    <property type="project" value="UniProtKB-UniRule"/>
</dbReference>
<dbReference type="CDD" id="cd14869">
    <property type="entry name" value="uS7_Bacteria"/>
    <property type="match status" value="1"/>
</dbReference>
<dbReference type="FunFam" id="1.10.455.10:FF:000001">
    <property type="entry name" value="30S ribosomal protein S7"/>
    <property type="match status" value="1"/>
</dbReference>
<dbReference type="Gene3D" id="1.10.455.10">
    <property type="entry name" value="Ribosomal protein S7 domain"/>
    <property type="match status" value="1"/>
</dbReference>
<dbReference type="HAMAP" id="MF_00480_B">
    <property type="entry name" value="Ribosomal_uS7_B"/>
    <property type="match status" value="1"/>
</dbReference>
<dbReference type="InterPro" id="IPR000235">
    <property type="entry name" value="Ribosomal_uS7"/>
</dbReference>
<dbReference type="InterPro" id="IPR005717">
    <property type="entry name" value="Ribosomal_uS7_bac/org-type"/>
</dbReference>
<dbReference type="InterPro" id="IPR020606">
    <property type="entry name" value="Ribosomal_uS7_CS"/>
</dbReference>
<dbReference type="InterPro" id="IPR023798">
    <property type="entry name" value="Ribosomal_uS7_dom"/>
</dbReference>
<dbReference type="InterPro" id="IPR036823">
    <property type="entry name" value="Ribosomal_uS7_dom_sf"/>
</dbReference>
<dbReference type="NCBIfam" id="TIGR01029">
    <property type="entry name" value="rpsG_bact"/>
    <property type="match status" value="1"/>
</dbReference>
<dbReference type="PANTHER" id="PTHR11205">
    <property type="entry name" value="RIBOSOMAL PROTEIN S7"/>
    <property type="match status" value="1"/>
</dbReference>
<dbReference type="Pfam" id="PF00177">
    <property type="entry name" value="Ribosomal_S7"/>
    <property type="match status" value="1"/>
</dbReference>
<dbReference type="PIRSF" id="PIRSF002122">
    <property type="entry name" value="RPS7p_RPS7a_RPS5e_RPS7o"/>
    <property type="match status" value="1"/>
</dbReference>
<dbReference type="SUPFAM" id="SSF47973">
    <property type="entry name" value="Ribosomal protein S7"/>
    <property type="match status" value="1"/>
</dbReference>
<dbReference type="PROSITE" id="PS00052">
    <property type="entry name" value="RIBOSOMAL_S7"/>
    <property type="match status" value="1"/>
</dbReference>
<sequence length="157" mass="18197">MSRRKTIEKRPVTPDPRFNSVLVAKFTNGLMERGKKSLAQRIFYDAMDLVADRMKDEEPLTVFEEAMEKVRPRVEVKSRRVGGATYQVPMEIRQARRNALAIRWIISYAKSRSGKCMSEKLASEVMDAFNNRGAAVKKRDDTHRMAEANKAFAHYRW</sequence>
<gene>
    <name evidence="1" type="primary">rpsG</name>
    <name type="ordered locus">DP1120</name>
</gene>
<comment type="function">
    <text evidence="1">One of the primary rRNA binding proteins, it binds directly to 16S rRNA where it nucleates assembly of the head domain of the 30S subunit. Is located at the subunit interface close to the decoding center, probably blocks exit of the E-site tRNA.</text>
</comment>
<comment type="subunit">
    <text evidence="1">Part of the 30S ribosomal subunit. Contacts proteins S9 and S11.</text>
</comment>
<comment type="similarity">
    <text evidence="1">Belongs to the universal ribosomal protein uS7 family.</text>
</comment>
<feature type="chain" id="PRO_0000124257" description="Small ribosomal subunit protein uS7">
    <location>
        <begin position="1"/>
        <end position="157"/>
    </location>
</feature>
<accession>Q6AP75</accession>
<evidence type="ECO:0000255" key="1">
    <source>
        <dbReference type="HAMAP-Rule" id="MF_00480"/>
    </source>
</evidence>
<evidence type="ECO:0000305" key="2"/>